<sequence length="63" mass="7102">MRCLPVFVILLLLIPSAPCVDAHPKTKDDMPLASFHDNAKGTLQRFWKKRGCCPKQMRCCTLG</sequence>
<accession>Q9U6Z6</accession>
<feature type="signal peptide" evidence="1">
    <location>
        <begin position="1"/>
        <end position="19"/>
    </location>
</feature>
<feature type="propeptide" id="PRO_0000035019" evidence="2">
    <location>
        <begin position="20"/>
        <end position="50"/>
    </location>
</feature>
<feature type="peptide" id="PRO_0000035020" description="Conotoxin p5a" evidence="2">
    <location>
        <begin position="51"/>
        <end position="62"/>
    </location>
</feature>
<feature type="modified residue" description="Leucine amide" evidence="2">
    <location>
        <position position="62"/>
    </location>
</feature>
<feature type="disulfide bond" evidence="2">
    <location>
        <begin position="52"/>
        <end position="59"/>
    </location>
</feature>
<feature type="disulfide bond" evidence="2">
    <location>
        <begin position="53"/>
        <end position="60"/>
    </location>
</feature>
<dbReference type="EMBL" id="AF167168">
    <property type="protein sequence ID" value="AAF03688.1"/>
    <property type="molecule type" value="mRNA"/>
</dbReference>
<dbReference type="PIR" id="F59147">
    <property type="entry name" value="F59147"/>
</dbReference>
<dbReference type="SMR" id="Q9U6Z6"/>
<dbReference type="ConoServer" id="1733">
    <property type="toxin name" value="PVA precursor"/>
</dbReference>
<dbReference type="GO" id="GO:0005576">
    <property type="term" value="C:extracellular region"/>
    <property type="evidence" value="ECO:0007669"/>
    <property type="project" value="UniProtKB-SubCell"/>
</dbReference>
<dbReference type="GO" id="GO:0090729">
    <property type="term" value="F:toxin activity"/>
    <property type="evidence" value="ECO:0007669"/>
    <property type="project" value="UniProtKB-KW"/>
</dbReference>
<dbReference type="InterPro" id="IPR031565">
    <property type="entry name" value="T-conotoxin"/>
</dbReference>
<dbReference type="Pfam" id="PF16981">
    <property type="entry name" value="Chi-conotoxin"/>
    <property type="match status" value="1"/>
</dbReference>
<organism>
    <name type="scientific">Conus purpurascens</name>
    <name type="common">Purple cone</name>
    <dbReference type="NCBI Taxonomy" id="41690"/>
    <lineage>
        <taxon>Eukaryota</taxon>
        <taxon>Metazoa</taxon>
        <taxon>Spiralia</taxon>
        <taxon>Lophotrochozoa</taxon>
        <taxon>Mollusca</taxon>
        <taxon>Gastropoda</taxon>
        <taxon>Caenogastropoda</taxon>
        <taxon>Neogastropoda</taxon>
        <taxon>Conoidea</taxon>
        <taxon>Conidae</taxon>
        <taxon>Conus</taxon>
        <taxon>Chelyconus</taxon>
    </lineage>
</organism>
<comment type="function">
    <text>In vivo, low levels of the peptide injected into male specimens of the Siamese fighting fish causes an immediate aggressive display in this fish in response to their reflection when placed in a mirrored aquarium; High levels of the peptide suppressed this behavior. No effect is observed when injected into mice.</text>
</comment>
<comment type="subcellular location">
    <subcellularLocation>
        <location evidence="2">Secreted</location>
    </subcellularLocation>
</comment>
<comment type="tissue specificity">
    <text evidence="5">Expressed by the venom duct.</text>
</comment>
<comment type="domain">
    <text evidence="4">The cysteine framework is V (CC-CC).</text>
</comment>
<comment type="mass spectrometry" mass="1337.5" method="LSI" evidence="2"/>
<comment type="similarity">
    <text evidence="4">Belongs to the conotoxin T superfamily.</text>
</comment>
<name>CT5A_CONPU</name>
<keyword id="KW-0027">Amidation</keyword>
<keyword id="KW-0165">Cleavage on pair of basic residues</keyword>
<keyword id="KW-0903">Direct protein sequencing</keyword>
<keyword id="KW-1015">Disulfide bond</keyword>
<keyword id="KW-0528">Neurotoxin</keyword>
<keyword id="KW-0964">Secreted</keyword>
<keyword id="KW-0732">Signal</keyword>
<keyword id="KW-0800">Toxin</keyword>
<evidence type="ECO:0000255" key="1"/>
<evidence type="ECO:0000269" key="2">
    <source>
    </source>
</evidence>
<evidence type="ECO:0000303" key="3">
    <source>
    </source>
</evidence>
<evidence type="ECO:0000305" key="4"/>
<evidence type="ECO:0000305" key="5">
    <source>
    </source>
</evidence>
<protein>
    <recommendedName>
        <fullName evidence="3">Conotoxin p5a</fullName>
    </recommendedName>
    <alternativeName>
        <fullName evidence="3">P5.1</fullName>
    </alternativeName>
    <alternativeName>
        <fullName evidence="4">PVA</fullName>
    </alternativeName>
</protein>
<proteinExistence type="evidence at protein level"/>
<reference key="1">
    <citation type="journal article" date="1999" name="J. Biol. Chem.">
        <title>The T-superfamily of conotoxins.</title>
        <authorList>
            <person name="Walker C.S."/>
            <person name="Steel D."/>
            <person name="Jacobsen R.B."/>
            <person name="Lirazan M.B."/>
            <person name="Cruz L.J."/>
            <person name="Hooper D."/>
            <person name="Shetty R."/>
            <person name="DelaCruz R.C."/>
            <person name="Nielsen J.S."/>
            <person name="Zhou L.M."/>
            <person name="Bandyopadhyay P."/>
            <person name="Craig A.G."/>
            <person name="Olivera B.M."/>
        </authorList>
    </citation>
    <scope>NUCLEOTIDE SEQUENCE [MRNA]</scope>
    <scope>PROTEIN SEQUENCE OF 51-62</scope>
    <scope>MASS SPECTROMETRY</scope>
    <scope>AMIDATION AT LEU-62</scope>
    <scope>SYNTHESIS OF 51-62</scope>
    <scope>SUBCELLULAR LOCATION</scope>
    <source>
        <tissue>Venom</tissue>
        <tissue>Venom duct</tissue>
    </source>
</reference>
<reference key="2">
    <citation type="journal article" date="1999" name="J. Biol. Chem.">
        <authorList>
            <person name="Walker C.S."/>
            <person name="Steel D."/>
            <person name="Jacobsen R.B."/>
            <person name="Lirazan M.B."/>
            <person name="Cruz L.J."/>
            <person name="Hooper D."/>
            <person name="Shetty R."/>
            <person name="DelaCruz R.C."/>
            <person name="Nielsen J.S."/>
            <person name="Zhou L.M."/>
            <person name="Bandyopadhyay P."/>
            <person name="Craig A.G."/>
            <person name="Olivera B.M."/>
        </authorList>
    </citation>
    <scope>ERRATUM OF PUBMED:10521453</scope>
</reference>